<comment type="function">
    <text evidence="1">Class I viral fusion protein. Under the current model, the protein has at least 3 conformational states: pre-fusion native state, pre-hairpin intermediate state, and post-fusion hairpin state. During viral and plasma cell membrane fusion, the heptad repeat (HR) regions assume a trimer-of-hairpins structure, positioning the fusion peptide in close proximity to the C-terminal region of the ectodomain. The formation of this structure appears to drive apposition and subsequent fusion of viral and plasma cell membranes. Directs fusion of viral and cellular membranes leading to delivery of the nucleocapsid into the cytoplasm. This fusion is pH independent and occurs directly at the outer cell membrane. The trimer of F1-F2 (F protein) probably interacts with HN at the virion surface. Upon HN binding to its cellular receptor, the hydrophobic fusion peptide is unmasked and interacts with the cellular membrane, inducing the fusion between cell and virion membranes. Later in infection, F proteins expressed at the plasma membrane of infected cells could mediate fusion with adjacent cells to form syncytia, a cytopathic effect that could lead to tissue necrosis (By similarity).</text>
</comment>
<comment type="subunit">
    <text evidence="3">Homotrimer; disulfide-linked F1-F2 (By similarity). Interacts with host LAMP1; LAMP2 and LAMP3; these interactions promote the cleavage of the viral fusion protein F (By similarity).</text>
</comment>
<comment type="subcellular location">
    <subcellularLocation>
        <location evidence="1">Virion membrane</location>
        <topology evidence="1">Single-pass type I membrane protein</topology>
    </subcellularLocation>
    <subcellularLocation>
        <location evidence="1">Host cell membrane</location>
        <topology evidence="1">Single-pass membrane protein</topology>
    </subcellularLocation>
</comment>
<comment type="domain">
    <text evidence="3">The 2 coiled coil regions form a stable six-helix bundle.</text>
</comment>
<comment type="PTM">
    <text evidence="4">The inactive precursor F0 is glycosylated and proteolytically cleaved into F1 and F2 to be functionally active. The cleavage is mediated by cellular proteases including host FURIN during the transport and maturation of the polypeptide.</text>
</comment>
<comment type="similarity">
    <text evidence="7">Belongs to the paramyxoviruses fusion glycoprotein family.</text>
</comment>
<reference key="1">
    <citation type="journal article" date="1989" name="Virus Res.">
        <title>Nucleotide sequence of the matrix, fusion and putative SH protein genes of mumps virus and their deduced amino acid sequences.</title>
        <authorList>
            <person name="Elliott G.D."/>
            <person name="Afzal M.A."/>
            <person name="Martin S.J."/>
            <person name="Rima B.K."/>
        </authorList>
    </citation>
    <scope>NUCLEOTIDE SEQUENCE [GENOMIC RNA]</scope>
</reference>
<reference key="2">
    <citation type="journal article" date="2022" name="Viruses">
        <title>Exploring the Mumps Virus Glycoproteins: A Review.</title>
        <authorList>
            <person name="Frost J.R."/>
            <person name="Shaikh S."/>
            <person name="Severini A."/>
        </authorList>
    </citation>
    <scope>REVIEW</scope>
</reference>
<gene>
    <name type="primary">F</name>
</gene>
<proteinExistence type="inferred from homology"/>
<dbReference type="EMBL" id="D00663">
    <property type="protein sequence ID" value="BAA00561.1"/>
    <property type="molecule type" value="Genomic_RNA"/>
</dbReference>
<dbReference type="PIR" id="B60004">
    <property type="entry name" value="B60004"/>
</dbReference>
<dbReference type="SMR" id="P33481"/>
<dbReference type="GlyCosmos" id="P33481">
    <property type="glycosylation" value="7 sites, No reported glycans"/>
</dbReference>
<dbReference type="GO" id="GO:0020002">
    <property type="term" value="C:host cell plasma membrane"/>
    <property type="evidence" value="ECO:0007669"/>
    <property type="project" value="UniProtKB-SubCell"/>
</dbReference>
<dbReference type="GO" id="GO:0016020">
    <property type="term" value="C:membrane"/>
    <property type="evidence" value="ECO:0007669"/>
    <property type="project" value="UniProtKB-KW"/>
</dbReference>
<dbReference type="GO" id="GO:0019031">
    <property type="term" value="C:viral envelope"/>
    <property type="evidence" value="ECO:0007669"/>
    <property type="project" value="UniProtKB-KW"/>
</dbReference>
<dbReference type="GO" id="GO:0055036">
    <property type="term" value="C:virion membrane"/>
    <property type="evidence" value="ECO:0007669"/>
    <property type="project" value="UniProtKB-SubCell"/>
</dbReference>
<dbReference type="GO" id="GO:0019064">
    <property type="term" value="P:fusion of virus membrane with host plasma membrane"/>
    <property type="evidence" value="ECO:0007669"/>
    <property type="project" value="UniProtKB-KW"/>
</dbReference>
<dbReference type="GO" id="GO:0046718">
    <property type="term" value="P:symbiont entry into host cell"/>
    <property type="evidence" value="ECO:0007669"/>
    <property type="project" value="UniProtKB-KW"/>
</dbReference>
<dbReference type="Gene3D" id="1.10.287.2480">
    <property type="match status" value="1"/>
</dbReference>
<dbReference type="Gene3D" id="6.10.10.110">
    <property type="match status" value="1"/>
</dbReference>
<dbReference type="Gene3D" id="2.60.40.1690">
    <property type="entry name" value="Head and neck region of the ectodomain of NDV fusion glycoprotein"/>
    <property type="match status" value="1"/>
</dbReference>
<dbReference type="Gene3D" id="2.40.490.10">
    <property type="entry name" value="Newcastle disease virus like domain"/>
    <property type="match status" value="1"/>
</dbReference>
<dbReference type="Gene3D" id="1.10.287.770">
    <property type="entry name" value="YojJ-like"/>
    <property type="match status" value="1"/>
</dbReference>
<dbReference type="InterPro" id="IPR000776">
    <property type="entry name" value="Fusion_F0_Paramyxovir"/>
</dbReference>
<dbReference type="Pfam" id="PF00523">
    <property type="entry name" value="Fusion_gly"/>
    <property type="match status" value="1"/>
</dbReference>
<dbReference type="SUPFAM" id="SSF69922">
    <property type="entry name" value="Head and neck region of the ectodomain of NDV fusion glycoprotein"/>
    <property type="match status" value="1"/>
</dbReference>
<dbReference type="SUPFAM" id="SSF58069">
    <property type="entry name" value="Virus ectodomain"/>
    <property type="match status" value="1"/>
</dbReference>
<accession>P33481</accession>
<organismHost>
    <name type="scientific">Homo sapiens</name>
    <name type="common">Human</name>
    <dbReference type="NCBI Taxonomy" id="9606"/>
</organismHost>
<sequence>MKAFPVICLGFAIFSSSICVNINILQQIGYIKQQVRQLSYYSQSSSSYVVVKLLPNIQPTDNSCEFKSVTQYNKTLSNLLLPIAENINNITSPSPGSRRHKRFAGIAIGIAALGVATAAQVTAAVSLVQAQTNARAIAAMKNSIQATNRAVFEVKEGTQQLAIAVQAIQDHINTIMNTQLNNMSCQILDNQLATSLGLYLTELTTVFRPQLINPALSPISIQALRSLLGSMTPAVVQATLSTSISAAEILSAGLMEGQIVSVLLDEMQMIVKINVPTIVTQSNALVIDFYSISSFINNQESIIQLPDRILEIGNEQWRYPAKNCKLTRHHIFCQYNEAERLSLETKLSVAGNISACVFSSIAGSYMRRFVALDGTIVANCRSLTCLCKSPSYPIYQPDHHAVTTIDLTSCQTLSLDGLDFSIVSLSNITYAENLTISLSQTINTQPIDISTELSKVNASLQNAVKYIKESNHQLQSVSVSSKIGAIIVAALVLSILSIIISLLFCFWAYIATKEIRRINFKTNHINTISSSVDDLIRY</sequence>
<evidence type="ECO:0000250" key="1"/>
<evidence type="ECO:0000250" key="2">
    <source>
        <dbReference type="UniProtKB" id="P09458"/>
    </source>
</evidence>
<evidence type="ECO:0000250" key="3">
    <source>
        <dbReference type="UniProtKB" id="P11236"/>
    </source>
</evidence>
<evidence type="ECO:0000250" key="4">
    <source>
        <dbReference type="UniProtKB" id="Q5SC53"/>
    </source>
</evidence>
<evidence type="ECO:0000250" key="5">
    <source>
        <dbReference type="UniProtKB" id="Q786F3"/>
    </source>
</evidence>
<evidence type="ECO:0000255" key="6"/>
<evidence type="ECO:0000305" key="7"/>
<feature type="signal peptide" evidence="2">
    <location>
        <begin position="1"/>
        <end position="19"/>
    </location>
</feature>
<feature type="chain" id="PRO_0000039288" description="Fusion glycoprotein F0">
    <location>
        <begin position="20"/>
        <end position="538"/>
    </location>
</feature>
<feature type="chain" id="PRO_0000039289" description="Fusion glycoprotein F2">
    <location>
        <begin position="20"/>
        <end position="102"/>
    </location>
</feature>
<feature type="chain" id="PRO_0000039290" description="Fusion glycoprotein F1">
    <location>
        <begin position="103"/>
        <end position="538"/>
    </location>
</feature>
<feature type="topological domain" description="Extracellular" evidence="1">
    <location>
        <begin position="20"/>
        <end position="486"/>
    </location>
</feature>
<feature type="transmembrane region" description="Helical" evidence="6">
    <location>
        <begin position="487"/>
        <end position="507"/>
    </location>
</feature>
<feature type="topological domain" description="Cytoplasmic" evidence="1">
    <location>
        <begin position="508"/>
        <end position="538"/>
    </location>
</feature>
<feature type="region of interest" description="Fusion peptide" evidence="5">
    <location>
        <begin position="103"/>
        <end position="127"/>
    </location>
</feature>
<feature type="coiled-coil region" evidence="6">
    <location>
        <begin position="128"/>
        <end position="156"/>
    </location>
</feature>
<feature type="coiled-coil region" evidence="6">
    <location>
        <begin position="452"/>
        <end position="477"/>
    </location>
</feature>
<feature type="site" description="Determinant for fusogenicity and cleavage efficiency" evidence="4">
    <location>
        <position position="95"/>
    </location>
</feature>
<feature type="site" description="Cleavage; by host" evidence="4">
    <location>
        <begin position="102"/>
        <end position="103"/>
    </location>
</feature>
<feature type="glycosylation site" description="N-linked (GlcNAc...) asparagine; by host" evidence="5">
    <location>
        <position position="56"/>
    </location>
</feature>
<feature type="glycosylation site" description="N-linked (GlcNAc...) asparagine; by host" evidence="6">
    <location>
        <position position="73"/>
    </location>
</feature>
<feature type="glycosylation site" description="N-linked (GlcNAc...) asparagine; by host" evidence="6">
    <location>
        <position position="89"/>
    </location>
</feature>
<feature type="glycosylation site" description="N-linked (GlcNAc...) asparagine; by host" evidence="6">
    <location>
        <position position="182"/>
    </location>
</feature>
<feature type="glycosylation site" description="N-linked (GlcNAc...) asparagine; by host" evidence="6">
    <location>
        <position position="352"/>
    </location>
</feature>
<feature type="glycosylation site" description="N-linked (GlcNAc...) asparagine; by host" evidence="6">
    <location>
        <position position="427"/>
    </location>
</feature>
<feature type="glycosylation site" description="N-linked (GlcNAc...) asparagine; by host" evidence="6">
    <location>
        <position position="433"/>
    </location>
</feature>
<feature type="glycosylation site" description="N-linked (GlcNAc...) asparagine; by host" evidence="6">
    <location>
        <position position="457"/>
    </location>
</feature>
<feature type="disulfide bond" description="Interchain (with C-195)" evidence="5">
    <location>
        <position position="64"/>
    </location>
</feature>
<feature type="disulfide bond" description="Interchain (with C-68)" evidence="5">
    <location>
        <position position="185"/>
    </location>
</feature>
<feature type="disulfide bond" evidence="5">
    <location>
        <begin position="324"/>
        <end position="333"/>
    </location>
</feature>
<feature type="disulfide bond" evidence="5">
    <location>
        <begin position="380"/>
        <end position="385"/>
    </location>
</feature>
<feature type="disulfide bond" evidence="5">
    <location>
        <begin position="387"/>
        <end position="410"/>
    </location>
</feature>
<name>FUS_MUMPS</name>
<protein>
    <recommendedName>
        <fullName>Fusion glycoprotein F0</fullName>
    </recommendedName>
    <component>
        <recommendedName>
            <fullName>Fusion glycoprotein F2</fullName>
        </recommendedName>
    </component>
    <component>
        <recommendedName>
            <fullName>Fusion glycoprotein F1</fullName>
        </recommendedName>
    </component>
</protein>
<keyword id="KW-0165">Cleavage on pair of basic residues</keyword>
<keyword id="KW-0175">Coiled coil</keyword>
<keyword id="KW-1015">Disulfide bond</keyword>
<keyword id="KW-1169">Fusion of virus membrane with host cell membrane</keyword>
<keyword id="KW-1168">Fusion of virus membrane with host membrane</keyword>
<keyword id="KW-0325">Glycoprotein</keyword>
<keyword id="KW-1032">Host cell membrane</keyword>
<keyword id="KW-1043">Host membrane</keyword>
<keyword id="KW-0472">Membrane</keyword>
<keyword id="KW-0732">Signal</keyword>
<keyword id="KW-0812">Transmembrane</keyword>
<keyword id="KW-1133">Transmembrane helix</keyword>
<keyword id="KW-0261">Viral envelope protein</keyword>
<keyword id="KW-1162">Viral penetration into host cytoplasm</keyword>
<keyword id="KW-0946">Virion</keyword>
<keyword id="KW-1160">Virus entry into host cell</keyword>
<organism>
    <name type="scientific">Mumps virus (strain SBL)</name>
    <name type="common">MuV</name>
    <dbReference type="NCBI Taxonomy" id="33729"/>
    <lineage>
        <taxon>Viruses</taxon>
        <taxon>Riboviria</taxon>
        <taxon>Orthornavirae</taxon>
        <taxon>Negarnaviricota</taxon>
        <taxon>Haploviricotina</taxon>
        <taxon>Monjiviricetes</taxon>
        <taxon>Mononegavirales</taxon>
        <taxon>Paramyxoviridae</taxon>
        <taxon>Rubulavirinae</taxon>
        <taxon>Orthorubulavirus</taxon>
        <taxon>Orthorubulavirus parotitidis</taxon>
        <taxon>Mumps orthorubulavirus</taxon>
    </lineage>
</organism>